<reference key="1">
    <citation type="journal article" date="2007" name="Science">
        <title>Legumes symbioses: absence of nod genes in photosynthetic bradyrhizobia.</title>
        <authorList>
            <person name="Giraud E."/>
            <person name="Moulin L."/>
            <person name="Vallenet D."/>
            <person name="Barbe V."/>
            <person name="Cytryn E."/>
            <person name="Avarre J.-C."/>
            <person name="Jaubert M."/>
            <person name="Simon D."/>
            <person name="Cartieaux F."/>
            <person name="Prin Y."/>
            <person name="Bena G."/>
            <person name="Hannibal L."/>
            <person name="Fardoux J."/>
            <person name="Kojadinovic M."/>
            <person name="Vuillet L."/>
            <person name="Lajus A."/>
            <person name="Cruveiller S."/>
            <person name="Rouy Z."/>
            <person name="Mangenot S."/>
            <person name="Segurens B."/>
            <person name="Dossat C."/>
            <person name="Franck W.L."/>
            <person name="Chang W.-S."/>
            <person name="Saunders E."/>
            <person name="Bruce D."/>
            <person name="Richardson P."/>
            <person name="Normand P."/>
            <person name="Dreyfus B."/>
            <person name="Pignol D."/>
            <person name="Stacey G."/>
            <person name="Emerich D."/>
            <person name="Vermeglio A."/>
            <person name="Medigue C."/>
            <person name="Sadowsky M."/>
        </authorList>
    </citation>
    <scope>NUCLEOTIDE SEQUENCE [LARGE SCALE GENOMIC DNA]</scope>
    <source>
        <strain>ORS 278</strain>
    </source>
</reference>
<gene>
    <name evidence="2" type="primary">frc</name>
    <name type="ordered locus">BRADO4956</name>
</gene>
<proteinExistence type="inferred from homology"/>
<sequence length="425" mass="46620">MTKALEGVRILDFTHVQSGPTCTQLLAWFGADVIKVERPGVGDITRGQLQDIPNVDSLYFTMLNHNKRSITLDTKNPKGKEVLTELIKKCDVLVENFGPGVLDRMGFPWEKIQAINPKMIVASIKGFGPGPYEDCKVYENVAQCTGGAASTTGFRDGLPLVTGAQIGDSGTGLHLALGIVTALYQRTHTGRGQRVTAAMQDGVLNLCRVKLRDQQRLDHGPLKEYSQFGEGVPFGDAVPRAGNDSGGGQPGRILKCKGWETDPNAYIYFITQAPVWEKICDVIGEPTWKTDPNYAKPAARLPRLNEIFGRIEQWTMTKTKFEAMDILNEFDIPCGPILSMKEIAEDESLRKTGTLVEVDHPTRGKYLSVGNPIKLSDSPADVTRSPLLGEHTDEILRQVLGFSDHQVAEIHDSGALDPPRKEAAE</sequence>
<comment type="function">
    <text evidence="1">Involved in the catabolism of oxalate and in the adapatation to low pH via the induction of the oxalate-dependent acid tolerance response (ATR). Catalyzes the transfer of the CoA moiety from formyl-CoA to oxalate (By similarity).</text>
</comment>
<comment type="catalytic activity">
    <reaction evidence="2">
        <text>formyl-CoA + oxalate = oxalyl-CoA + formate</text>
        <dbReference type="Rhea" id="RHEA:16545"/>
        <dbReference type="ChEBI" id="CHEBI:15740"/>
        <dbReference type="ChEBI" id="CHEBI:30623"/>
        <dbReference type="ChEBI" id="CHEBI:57376"/>
        <dbReference type="ChEBI" id="CHEBI:57388"/>
        <dbReference type="EC" id="2.8.3.16"/>
    </reaction>
</comment>
<comment type="pathway">
    <text evidence="2">Metabolic intermediate degradation; oxalate degradation; CO(2) and formate from oxalate: step 1/2.</text>
</comment>
<comment type="subunit">
    <text evidence="2">Homodimer.</text>
</comment>
<comment type="similarity">
    <text evidence="2">Belongs to the CoA-transferase III family. Frc subfamily.</text>
</comment>
<keyword id="KW-1185">Reference proteome</keyword>
<keyword id="KW-0808">Transferase</keyword>
<organism>
    <name type="scientific">Bradyrhizobium sp. (strain ORS 278)</name>
    <dbReference type="NCBI Taxonomy" id="114615"/>
    <lineage>
        <taxon>Bacteria</taxon>
        <taxon>Pseudomonadati</taxon>
        <taxon>Pseudomonadota</taxon>
        <taxon>Alphaproteobacteria</taxon>
        <taxon>Hyphomicrobiales</taxon>
        <taxon>Nitrobacteraceae</taxon>
        <taxon>Bradyrhizobium</taxon>
    </lineage>
</organism>
<evidence type="ECO:0000250" key="1"/>
<evidence type="ECO:0000255" key="2">
    <source>
        <dbReference type="HAMAP-Rule" id="MF_00742"/>
    </source>
</evidence>
<dbReference type="EC" id="2.8.3.16" evidence="2"/>
<dbReference type="EMBL" id="CU234118">
    <property type="protein sequence ID" value="CAL78658.1"/>
    <property type="molecule type" value="Genomic_DNA"/>
</dbReference>
<dbReference type="RefSeq" id="WP_011927755.1">
    <property type="nucleotide sequence ID" value="NC_009445.1"/>
</dbReference>
<dbReference type="SMR" id="A4YXN2"/>
<dbReference type="STRING" id="114615.BRADO4956"/>
<dbReference type="KEGG" id="bra:BRADO4956"/>
<dbReference type="eggNOG" id="COG1804">
    <property type="taxonomic scope" value="Bacteria"/>
</dbReference>
<dbReference type="HOGENOM" id="CLU_033975_2_1_5"/>
<dbReference type="OrthoDB" id="9806585at2"/>
<dbReference type="UniPathway" id="UPA00540">
    <property type="reaction ID" value="UER00598"/>
</dbReference>
<dbReference type="Proteomes" id="UP000001994">
    <property type="component" value="Chromosome"/>
</dbReference>
<dbReference type="GO" id="GO:0033608">
    <property type="term" value="F:formyl-CoA transferase activity"/>
    <property type="evidence" value="ECO:0007669"/>
    <property type="project" value="UniProtKB-EC"/>
</dbReference>
<dbReference type="GO" id="GO:0033611">
    <property type="term" value="P:oxalate catabolic process"/>
    <property type="evidence" value="ECO:0007669"/>
    <property type="project" value="UniProtKB-UniRule"/>
</dbReference>
<dbReference type="Gene3D" id="3.40.50.10540">
    <property type="entry name" value="Crotonobetainyl-coa:carnitine coa-transferase, domain 1"/>
    <property type="match status" value="1"/>
</dbReference>
<dbReference type="Gene3D" id="3.30.1540.10">
    <property type="entry name" value="formyl-coa transferase, domain 3"/>
    <property type="match status" value="1"/>
</dbReference>
<dbReference type="HAMAP" id="MF_00742">
    <property type="entry name" value="Formyl_CoA_transfer"/>
    <property type="match status" value="1"/>
</dbReference>
<dbReference type="InterPro" id="IPR050483">
    <property type="entry name" value="CoA-transferase_III_domain"/>
</dbReference>
<dbReference type="InterPro" id="IPR003673">
    <property type="entry name" value="CoA-Trfase_fam_III"/>
</dbReference>
<dbReference type="InterPro" id="IPR044855">
    <property type="entry name" value="CoA-Trfase_III_dom3_sf"/>
</dbReference>
<dbReference type="InterPro" id="IPR023606">
    <property type="entry name" value="CoA-Trfase_III_dom_1_sf"/>
</dbReference>
<dbReference type="InterPro" id="IPR017659">
    <property type="entry name" value="Formyl_CoA_transfer"/>
</dbReference>
<dbReference type="NCBIfam" id="TIGR03253">
    <property type="entry name" value="oxalate_frc"/>
    <property type="match status" value="1"/>
</dbReference>
<dbReference type="NCBIfam" id="NF003809">
    <property type="entry name" value="PRK05398.1"/>
    <property type="match status" value="1"/>
</dbReference>
<dbReference type="PANTHER" id="PTHR48207">
    <property type="entry name" value="SUCCINATE--HYDROXYMETHYLGLUTARATE COA-TRANSFERASE"/>
    <property type="match status" value="1"/>
</dbReference>
<dbReference type="PANTHER" id="PTHR48207:SF3">
    <property type="entry name" value="SUCCINATE--HYDROXYMETHYLGLUTARATE COA-TRANSFERASE"/>
    <property type="match status" value="1"/>
</dbReference>
<dbReference type="Pfam" id="PF02515">
    <property type="entry name" value="CoA_transf_3"/>
    <property type="match status" value="1"/>
</dbReference>
<dbReference type="SUPFAM" id="SSF89796">
    <property type="entry name" value="CoA-transferase family III (CaiB/BaiF)"/>
    <property type="match status" value="1"/>
</dbReference>
<name>FCTA_BRASO</name>
<accession>A4YXN2</accession>
<protein>
    <recommendedName>
        <fullName>Formyl-CoA:oxalate CoA-transferase</fullName>
        <shortName>FCOCT</shortName>
        <ecNumber evidence="2">2.8.3.16</ecNumber>
    </recommendedName>
    <alternativeName>
        <fullName evidence="2">Formyl-coenzyme A transferase</fullName>
        <shortName evidence="2">Formyl-CoA transferase</shortName>
    </alternativeName>
</protein>
<feature type="chain" id="PRO_0000300986" description="Formyl-CoA:oxalate CoA-transferase">
    <location>
        <begin position="1"/>
        <end position="425"/>
    </location>
</feature>
<feature type="active site" description="Nucleophile" evidence="2">
    <location>
        <position position="168"/>
    </location>
</feature>
<feature type="binding site" evidence="1">
    <location>
        <begin position="17"/>
        <end position="18"/>
    </location>
    <ligand>
        <name>CoA</name>
        <dbReference type="ChEBI" id="CHEBI:57287"/>
    </ligand>
</feature>
<feature type="binding site" evidence="2">
    <location>
        <position position="38"/>
    </location>
    <ligand>
        <name>CoA</name>
        <dbReference type="ChEBI" id="CHEBI:57287"/>
    </ligand>
</feature>
<feature type="binding site" evidence="1">
    <location>
        <begin position="72"/>
        <end position="75"/>
    </location>
    <ligand>
        <name>CoA</name>
        <dbReference type="ChEBI" id="CHEBI:57287"/>
    </ligand>
</feature>
<feature type="binding site" evidence="1">
    <location>
        <begin position="96"/>
        <end position="98"/>
    </location>
    <ligand>
        <name>CoA</name>
        <dbReference type="ChEBI" id="CHEBI:57287"/>
    </ligand>
</feature>
<feature type="binding site" evidence="2">
    <location>
        <position position="104"/>
    </location>
    <ligand>
        <name>CoA</name>
        <dbReference type="ChEBI" id="CHEBI:57287"/>
    </ligand>
</feature>
<feature type="binding site" evidence="1">
    <location>
        <begin position="136"/>
        <end position="139"/>
    </location>
    <ligand>
        <name>CoA</name>
        <dbReference type="ChEBI" id="CHEBI:57287"/>
    </ligand>
</feature>
<feature type="binding site" evidence="1">
    <location>
        <begin position="247"/>
        <end position="249"/>
    </location>
    <ligand>
        <name>substrate</name>
    </ligand>
</feature>